<keyword id="KW-0963">Cytoplasm</keyword>
<keyword id="KW-0489">Methyltransferase</keyword>
<keyword id="KW-0545">Nucleotide biosynthesis</keyword>
<keyword id="KW-0808">Transferase</keyword>
<name>TYSY_YERPS</name>
<accession>Q667F9</accession>
<protein>
    <recommendedName>
        <fullName evidence="1">Thymidylate synthase</fullName>
        <shortName evidence="1">TS</shortName>
        <shortName evidence="1">TSase</shortName>
        <ecNumber evidence="1">2.1.1.45</ecNumber>
    </recommendedName>
</protein>
<evidence type="ECO:0000255" key="1">
    <source>
        <dbReference type="HAMAP-Rule" id="MF_00008"/>
    </source>
</evidence>
<dbReference type="EC" id="2.1.1.45" evidence="1"/>
<dbReference type="EMBL" id="BX936398">
    <property type="protein sequence ID" value="CAH22271.1"/>
    <property type="molecule type" value="Genomic_DNA"/>
</dbReference>
<dbReference type="RefSeq" id="WP_011192873.1">
    <property type="nucleotide sequence ID" value="NC_006155.1"/>
</dbReference>
<dbReference type="SMR" id="Q667F9"/>
<dbReference type="GeneID" id="96662402"/>
<dbReference type="KEGG" id="ypo:BZ17_3584"/>
<dbReference type="KEGG" id="yps:YPTB3033"/>
<dbReference type="PATRIC" id="fig|273123.14.peg.3767"/>
<dbReference type="UniPathway" id="UPA00575"/>
<dbReference type="Proteomes" id="UP000001011">
    <property type="component" value="Chromosome"/>
</dbReference>
<dbReference type="GO" id="GO:0005829">
    <property type="term" value="C:cytosol"/>
    <property type="evidence" value="ECO:0007669"/>
    <property type="project" value="TreeGrafter"/>
</dbReference>
<dbReference type="GO" id="GO:0004799">
    <property type="term" value="F:thymidylate synthase activity"/>
    <property type="evidence" value="ECO:0007669"/>
    <property type="project" value="UniProtKB-UniRule"/>
</dbReference>
<dbReference type="GO" id="GO:0006231">
    <property type="term" value="P:dTMP biosynthetic process"/>
    <property type="evidence" value="ECO:0007669"/>
    <property type="project" value="UniProtKB-UniRule"/>
</dbReference>
<dbReference type="GO" id="GO:0006235">
    <property type="term" value="P:dTTP biosynthetic process"/>
    <property type="evidence" value="ECO:0007669"/>
    <property type="project" value="UniProtKB-UniRule"/>
</dbReference>
<dbReference type="GO" id="GO:0032259">
    <property type="term" value="P:methylation"/>
    <property type="evidence" value="ECO:0007669"/>
    <property type="project" value="UniProtKB-KW"/>
</dbReference>
<dbReference type="CDD" id="cd00351">
    <property type="entry name" value="TS_Pyrimidine_HMase"/>
    <property type="match status" value="1"/>
</dbReference>
<dbReference type="FunFam" id="3.30.572.10:FF:000001">
    <property type="entry name" value="Thymidylate synthase"/>
    <property type="match status" value="1"/>
</dbReference>
<dbReference type="Gene3D" id="3.30.572.10">
    <property type="entry name" value="Thymidylate synthase/dCMP hydroxymethylase domain"/>
    <property type="match status" value="1"/>
</dbReference>
<dbReference type="HAMAP" id="MF_00008">
    <property type="entry name" value="Thymidy_synth_bact"/>
    <property type="match status" value="1"/>
</dbReference>
<dbReference type="InterPro" id="IPR045097">
    <property type="entry name" value="Thymidate_synth/dCMP_Mease"/>
</dbReference>
<dbReference type="InterPro" id="IPR023451">
    <property type="entry name" value="Thymidate_synth/dCMP_Mease_dom"/>
</dbReference>
<dbReference type="InterPro" id="IPR036926">
    <property type="entry name" value="Thymidate_synth/dCMP_Mease_sf"/>
</dbReference>
<dbReference type="InterPro" id="IPR000398">
    <property type="entry name" value="Thymidylate_synthase"/>
</dbReference>
<dbReference type="InterPro" id="IPR020940">
    <property type="entry name" value="Thymidylate_synthase_AS"/>
</dbReference>
<dbReference type="NCBIfam" id="NF002497">
    <property type="entry name" value="PRK01827.1-3"/>
    <property type="match status" value="1"/>
</dbReference>
<dbReference type="NCBIfam" id="NF002499">
    <property type="entry name" value="PRK01827.1-5"/>
    <property type="match status" value="1"/>
</dbReference>
<dbReference type="NCBIfam" id="TIGR03284">
    <property type="entry name" value="thym_sym"/>
    <property type="match status" value="2"/>
</dbReference>
<dbReference type="PANTHER" id="PTHR11548:SF9">
    <property type="entry name" value="THYMIDYLATE SYNTHASE"/>
    <property type="match status" value="1"/>
</dbReference>
<dbReference type="PANTHER" id="PTHR11548">
    <property type="entry name" value="THYMIDYLATE SYNTHASE 1"/>
    <property type="match status" value="1"/>
</dbReference>
<dbReference type="Pfam" id="PF00303">
    <property type="entry name" value="Thymidylat_synt"/>
    <property type="match status" value="1"/>
</dbReference>
<dbReference type="PRINTS" id="PR00108">
    <property type="entry name" value="THYMDSNTHASE"/>
</dbReference>
<dbReference type="SUPFAM" id="SSF55831">
    <property type="entry name" value="Thymidylate synthase/dCMP hydroxymethylase"/>
    <property type="match status" value="1"/>
</dbReference>
<dbReference type="PROSITE" id="PS00091">
    <property type="entry name" value="THYMIDYLATE_SYNTHASE"/>
    <property type="match status" value="1"/>
</dbReference>
<feature type="chain" id="PRO_0000141052" description="Thymidylate synthase">
    <location>
        <begin position="1"/>
        <end position="264"/>
    </location>
</feature>
<feature type="active site" description="Nucleophile" evidence="1">
    <location>
        <position position="146"/>
    </location>
</feature>
<feature type="binding site" description="in other chain" evidence="1">
    <location>
        <position position="21"/>
    </location>
    <ligand>
        <name>dUMP</name>
        <dbReference type="ChEBI" id="CHEBI:246422"/>
        <note>ligand shared between dimeric partners</note>
    </ligand>
</feature>
<feature type="binding site" evidence="1">
    <location>
        <position position="51"/>
    </location>
    <ligand>
        <name>(6R)-5,10-methylene-5,6,7,8-tetrahydrofolate</name>
        <dbReference type="ChEBI" id="CHEBI:15636"/>
    </ligand>
</feature>
<feature type="binding site" evidence="1">
    <location>
        <begin position="126"/>
        <end position="127"/>
    </location>
    <ligand>
        <name>dUMP</name>
        <dbReference type="ChEBI" id="CHEBI:246422"/>
        <note>ligand shared between dimeric partners</note>
    </ligand>
</feature>
<feature type="binding site" description="in other chain" evidence="1">
    <location>
        <begin position="166"/>
        <end position="169"/>
    </location>
    <ligand>
        <name>dUMP</name>
        <dbReference type="ChEBI" id="CHEBI:246422"/>
        <note>ligand shared between dimeric partners</note>
    </ligand>
</feature>
<feature type="binding site" evidence="1">
    <location>
        <position position="169"/>
    </location>
    <ligand>
        <name>(6R)-5,10-methylene-5,6,7,8-tetrahydrofolate</name>
        <dbReference type="ChEBI" id="CHEBI:15636"/>
    </ligand>
</feature>
<feature type="binding site" description="in other chain" evidence="1">
    <location>
        <position position="177"/>
    </location>
    <ligand>
        <name>dUMP</name>
        <dbReference type="ChEBI" id="CHEBI:246422"/>
        <note>ligand shared between dimeric partners</note>
    </ligand>
</feature>
<feature type="binding site" description="in other chain" evidence="1">
    <location>
        <begin position="207"/>
        <end position="209"/>
    </location>
    <ligand>
        <name>dUMP</name>
        <dbReference type="ChEBI" id="CHEBI:246422"/>
        <note>ligand shared between dimeric partners</note>
    </ligand>
</feature>
<feature type="binding site" evidence="1">
    <location>
        <position position="263"/>
    </location>
    <ligand>
        <name>(6R)-5,10-methylene-5,6,7,8-tetrahydrofolate</name>
        <dbReference type="ChEBI" id="CHEBI:15636"/>
    </ligand>
</feature>
<gene>
    <name evidence="1" type="primary">thyA</name>
    <name type="ordered locus">YPTB3033</name>
</gene>
<sequence length="264" mass="30113">MKQYLDLMKKVLEEGTPKADRTGTGTLSIFGHQMRFNLQDGFPLVTTKRCHLRSIIHELLWFLNGDTNIAYLKENNVSIWDEWADENGDLGPIYGKQWRAWGAADGRKIDQLSNVVNQLKQDPDSRRIIVSAWNVGELDQMALAPCHAFFQFYVADGKLSCQLYQRSCDVFLGLPFNIASYALLVHMMAQQCDLAVGDFVWTGGDTHLYSNHIDQTHLQLSREPRALPKLVIKRKPDSLFDYHFDDFDIEGYDPHPGIKAPIAI</sequence>
<comment type="function">
    <text evidence="1">Catalyzes the reductive methylation of 2'-deoxyuridine-5'-monophosphate (dUMP) to 2'-deoxythymidine-5'-monophosphate (dTMP) while utilizing 5,10-methylenetetrahydrofolate (mTHF) as the methyl donor and reductant in the reaction, yielding dihydrofolate (DHF) as a by-product. This enzymatic reaction provides an intracellular de novo source of dTMP, an essential precursor for DNA biosynthesis.</text>
</comment>
<comment type="catalytic activity">
    <reaction evidence="1">
        <text>dUMP + (6R)-5,10-methylene-5,6,7,8-tetrahydrofolate = 7,8-dihydrofolate + dTMP</text>
        <dbReference type="Rhea" id="RHEA:12104"/>
        <dbReference type="ChEBI" id="CHEBI:15636"/>
        <dbReference type="ChEBI" id="CHEBI:57451"/>
        <dbReference type="ChEBI" id="CHEBI:63528"/>
        <dbReference type="ChEBI" id="CHEBI:246422"/>
        <dbReference type="EC" id="2.1.1.45"/>
    </reaction>
</comment>
<comment type="pathway">
    <text evidence="1">Pyrimidine metabolism; dTTP biosynthesis.</text>
</comment>
<comment type="subunit">
    <text evidence="1">Homodimer.</text>
</comment>
<comment type="subcellular location">
    <subcellularLocation>
        <location evidence="1">Cytoplasm</location>
    </subcellularLocation>
</comment>
<comment type="similarity">
    <text evidence="1">Belongs to the thymidylate synthase family. Bacterial-type ThyA subfamily.</text>
</comment>
<organism>
    <name type="scientific">Yersinia pseudotuberculosis serotype I (strain IP32953)</name>
    <dbReference type="NCBI Taxonomy" id="273123"/>
    <lineage>
        <taxon>Bacteria</taxon>
        <taxon>Pseudomonadati</taxon>
        <taxon>Pseudomonadota</taxon>
        <taxon>Gammaproteobacteria</taxon>
        <taxon>Enterobacterales</taxon>
        <taxon>Yersiniaceae</taxon>
        <taxon>Yersinia</taxon>
    </lineage>
</organism>
<reference key="1">
    <citation type="journal article" date="2004" name="Proc. Natl. Acad. Sci. U.S.A.">
        <title>Insights into the evolution of Yersinia pestis through whole-genome comparison with Yersinia pseudotuberculosis.</title>
        <authorList>
            <person name="Chain P.S.G."/>
            <person name="Carniel E."/>
            <person name="Larimer F.W."/>
            <person name="Lamerdin J."/>
            <person name="Stoutland P.O."/>
            <person name="Regala W.M."/>
            <person name="Georgescu A.M."/>
            <person name="Vergez L.M."/>
            <person name="Land M.L."/>
            <person name="Motin V.L."/>
            <person name="Brubaker R.R."/>
            <person name="Fowler J."/>
            <person name="Hinnebusch J."/>
            <person name="Marceau M."/>
            <person name="Medigue C."/>
            <person name="Simonet M."/>
            <person name="Chenal-Francisque V."/>
            <person name="Souza B."/>
            <person name="Dacheux D."/>
            <person name="Elliott J.M."/>
            <person name="Derbise A."/>
            <person name="Hauser L.J."/>
            <person name="Garcia E."/>
        </authorList>
    </citation>
    <scope>NUCLEOTIDE SEQUENCE [LARGE SCALE GENOMIC DNA]</scope>
    <source>
        <strain>IP32953</strain>
    </source>
</reference>
<proteinExistence type="inferred from homology"/>